<organism>
    <name type="scientific">Pseudomonas fluorescens (strain Pf0-1)</name>
    <dbReference type="NCBI Taxonomy" id="205922"/>
    <lineage>
        <taxon>Bacteria</taxon>
        <taxon>Pseudomonadati</taxon>
        <taxon>Pseudomonadota</taxon>
        <taxon>Gammaproteobacteria</taxon>
        <taxon>Pseudomonadales</taxon>
        <taxon>Pseudomonadaceae</taxon>
        <taxon>Pseudomonas</taxon>
    </lineage>
</organism>
<reference key="1">
    <citation type="journal article" date="2009" name="Genome Biol.">
        <title>Genomic and genetic analyses of diversity and plant interactions of Pseudomonas fluorescens.</title>
        <authorList>
            <person name="Silby M.W."/>
            <person name="Cerdeno-Tarraga A.M."/>
            <person name="Vernikos G.S."/>
            <person name="Giddens S.R."/>
            <person name="Jackson R.W."/>
            <person name="Preston G.M."/>
            <person name="Zhang X.-X."/>
            <person name="Moon C.D."/>
            <person name="Gehrig S.M."/>
            <person name="Godfrey S.A.C."/>
            <person name="Knight C.G."/>
            <person name="Malone J.G."/>
            <person name="Robinson Z."/>
            <person name="Spiers A.J."/>
            <person name="Harris S."/>
            <person name="Challis G.L."/>
            <person name="Yaxley A.M."/>
            <person name="Harris D."/>
            <person name="Seeger K."/>
            <person name="Murphy L."/>
            <person name="Rutter S."/>
            <person name="Squares R."/>
            <person name="Quail M.A."/>
            <person name="Saunders E."/>
            <person name="Mavromatis K."/>
            <person name="Brettin T.S."/>
            <person name="Bentley S.D."/>
            <person name="Hothersall J."/>
            <person name="Stephens E."/>
            <person name="Thomas C.M."/>
            <person name="Parkhill J."/>
            <person name="Levy S.B."/>
            <person name="Rainey P.B."/>
            <person name="Thomson N.R."/>
        </authorList>
    </citation>
    <scope>NUCLEOTIDE SEQUENCE [LARGE SCALE GENOMIC DNA]</scope>
    <source>
        <strain>Pf0-1</strain>
    </source>
</reference>
<evidence type="ECO:0000255" key="1">
    <source>
        <dbReference type="HAMAP-Rule" id="MF_01633"/>
    </source>
</evidence>
<accession>Q3K7W9</accession>
<comment type="function">
    <text evidence="1">Catalyzes the ATP-dependent conversion of 7-carboxy-7-deazaguanine (CDG) to 7-cyano-7-deazaguanine (preQ(0)).</text>
</comment>
<comment type="catalytic activity">
    <reaction evidence="1">
        <text>7-carboxy-7-deazaguanine + NH4(+) + ATP = 7-cyano-7-deazaguanine + ADP + phosphate + H2O + H(+)</text>
        <dbReference type="Rhea" id="RHEA:27982"/>
        <dbReference type="ChEBI" id="CHEBI:15377"/>
        <dbReference type="ChEBI" id="CHEBI:15378"/>
        <dbReference type="ChEBI" id="CHEBI:28938"/>
        <dbReference type="ChEBI" id="CHEBI:30616"/>
        <dbReference type="ChEBI" id="CHEBI:43474"/>
        <dbReference type="ChEBI" id="CHEBI:45075"/>
        <dbReference type="ChEBI" id="CHEBI:61036"/>
        <dbReference type="ChEBI" id="CHEBI:456216"/>
        <dbReference type="EC" id="6.3.4.20"/>
    </reaction>
</comment>
<comment type="cofactor">
    <cofactor evidence="1">
        <name>Zn(2+)</name>
        <dbReference type="ChEBI" id="CHEBI:29105"/>
    </cofactor>
    <text evidence="1">Binds 1 zinc ion per subunit.</text>
</comment>
<comment type="pathway">
    <text evidence="1">Purine metabolism; 7-cyano-7-deazaguanine biosynthesis.</text>
</comment>
<comment type="similarity">
    <text evidence="1">Belongs to the QueC family.</text>
</comment>
<gene>
    <name evidence="1" type="primary">queC</name>
    <name type="ordered locus">Pfl01_4398</name>
</gene>
<proteinExistence type="inferred from homology"/>
<feature type="chain" id="PRO_0000246887" description="7-cyano-7-deazaguanine synthase">
    <location>
        <begin position="1"/>
        <end position="230"/>
    </location>
</feature>
<feature type="binding site" evidence="1">
    <location>
        <begin position="16"/>
        <end position="26"/>
    </location>
    <ligand>
        <name>ATP</name>
        <dbReference type="ChEBI" id="CHEBI:30616"/>
    </ligand>
</feature>
<feature type="binding site" evidence="1">
    <location>
        <position position="195"/>
    </location>
    <ligand>
        <name>Zn(2+)</name>
        <dbReference type="ChEBI" id="CHEBI:29105"/>
    </ligand>
</feature>
<feature type="binding site" evidence="1">
    <location>
        <position position="205"/>
    </location>
    <ligand>
        <name>Zn(2+)</name>
        <dbReference type="ChEBI" id="CHEBI:29105"/>
    </ligand>
</feature>
<feature type="binding site" evidence="1">
    <location>
        <position position="208"/>
    </location>
    <ligand>
        <name>Zn(2+)</name>
        <dbReference type="ChEBI" id="CHEBI:29105"/>
    </ligand>
</feature>
<feature type="binding site" evidence="1">
    <location>
        <position position="211"/>
    </location>
    <ligand>
        <name>Zn(2+)</name>
        <dbReference type="ChEBI" id="CHEBI:29105"/>
    </ligand>
</feature>
<protein>
    <recommendedName>
        <fullName evidence="1">7-cyano-7-deazaguanine synthase</fullName>
        <ecNumber evidence="1">6.3.4.20</ecNumber>
    </recommendedName>
    <alternativeName>
        <fullName evidence="1">7-cyano-7-carbaguanine synthase</fullName>
    </alternativeName>
    <alternativeName>
        <fullName evidence="1">PreQ(0) synthase</fullName>
    </alternativeName>
    <alternativeName>
        <fullName evidence="1">Queuosine biosynthesis protein QueC</fullName>
    </alternativeName>
</protein>
<name>QUEC_PSEPF</name>
<dbReference type="EC" id="6.3.4.20" evidence="1"/>
<dbReference type="EMBL" id="CP000094">
    <property type="protein sequence ID" value="ABA76135.1"/>
    <property type="molecule type" value="Genomic_DNA"/>
</dbReference>
<dbReference type="RefSeq" id="WP_011335637.1">
    <property type="nucleotide sequence ID" value="NC_007492.2"/>
</dbReference>
<dbReference type="SMR" id="Q3K7W9"/>
<dbReference type="KEGG" id="pfo:Pfl01_4398"/>
<dbReference type="eggNOG" id="COG0603">
    <property type="taxonomic scope" value="Bacteria"/>
</dbReference>
<dbReference type="HOGENOM" id="CLU_081854_1_1_6"/>
<dbReference type="UniPathway" id="UPA00391"/>
<dbReference type="Proteomes" id="UP000002704">
    <property type="component" value="Chromosome"/>
</dbReference>
<dbReference type="GO" id="GO:0005524">
    <property type="term" value="F:ATP binding"/>
    <property type="evidence" value="ECO:0007669"/>
    <property type="project" value="UniProtKB-UniRule"/>
</dbReference>
<dbReference type="GO" id="GO:0016879">
    <property type="term" value="F:ligase activity, forming carbon-nitrogen bonds"/>
    <property type="evidence" value="ECO:0007669"/>
    <property type="project" value="UniProtKB-UniRule"/>
</dbReference>
<dbReference type="GO" id="GO:0008270">
    <property type="term" value="F:zinc ion binding"/>
    <property type="evidence" value="ECO:0007669"/>
    <property type="project" value="UniProtKB-UniRule"/>
</dbReference>
<dbReference type="GO" id="GO:0008616">
    <property type="term" value="P:queuosine biosynthetic process"/>
    <property type="evidence" value="ECO:0007669"/>
    <property type="project" value="UniProtKB-UniRule"/>
</dbReference>
<dbReference type="CDD" id="cd01995">
    <property type="entry name" value="QueC-like"/>
    <property type="match status" value="1"/>
</dbReference>
<dbReference type="FunFam" id="3.40.50.620:FF:000131">
    <property type="entry name" value="7-cyano-7-deazaguanine synthase"/>
    <property type="match status" value="1"/>
</dbReference>
<dbReference type="Gene3D" id="3.40.50.620">
    <property type="entry name" value="HUPs"/>
    <property type="match status" value="1"/>
</dbReference>
<dbReference type="HAMAP" id="MF_01633">
    <property type="entry name" value="QueC"/>
    <property type="match status" value="1"/>
</dbReference>
<dbReference type="InterPro" id="IPR018317">
    <property type="entry name" value="QueC"/>
</dbReference>
<dbReference type="InterPro" id="IPR014729">
    <property type="entry name" value="Rossmann-like_a/b/a_fold"/>
</dbReference>
<dbReference type="NCBIfam" id="TIGR00364">
    <property type="entry name" value="7-cyano-7-deazaguanine synthase QueC"/>
    <property type="match status" value="1"/>
</dbReference>
<dbReference type="PANTHER" id="PTHR42914">
    <property type="entry name" value="7-CYANO-7-DEAZAGUANINE SYNTHASE"/>
    <property type="match status" value="1"/>
</dbReference>
<dbReference type="PANTHER" id="PTHR42914:SF1">
    <property type="entry name" value="7-CYANO-7-DEAZAGUANINE SYNTHASE"/>
    <property type="match status" value="1"/>
</dbReference>
<dbReference type="Pfam" id="PF06508">
    <property type="entry name" value="QueC"/>
    <property type="match status" value="1"/>
</dbReference>
<dbReference type="PIRSF" id="PIRSF006293">
    <property type="entry name" value="ExsB"/>
    <property type="match status" value="1"/>
</dbReference>
<dbReference type="SUPFAM" id="SSF52402">
    <property type="entry name" value="Adenine nucleotide alpha hydrolases-like"/>
    <property type="match status" value="1"/>
</dbReference>
<keyword id="KW-0067">ATP-binding</keyword>
<keyword id="KW-0436">Ligase</keyword>
<keyword id="KW-0479">Metal-binding</keyword>
<keyword id="KW-0547">Nucleotide-binding</keyword>
<keyword id="KW-0671">Queuosine biosynthesis</keyword>
<keyword id="KW-0862">Zinc</keyword>
<sequence>MTEQLNTSQKRAVILLSGGLDSATVVAMARAEGYACYTMSFDYGQRSHAELHAAARVARDLGVVEHKVIGLNLNGMGGSALTDTSIDIPEELGEGIPVTYVPARNTVFLSLALGWAEVLGARDIFIGVNAVDYSGYPDCRPEFIESFERMANLATKAGVEGNGFRIQAPLQNLSKAQIVQAGVKLGVDYGLTVSCYQADDDGRACGKCDSCRLRAEGFAAAGISDPTRYF</sequence>